<comment type="function">
    <text evidence="1">Catalyzes the formation of S-adenosylmethionine (AdoMet) from methionine and ATP. The overall synthetic reaction is composed of two sequential steps, AdoMet formation and the subsequent tripolyphosphate hydrolysis which occurs prior to release of AdoMet from the enzyme.</text>
</comment>
<comment type="catalytic activity">
    <reaction evidence="1">
        <text>L-methionine + ATP + H2O = S-adenosyl-L-methionine + phosphate + diphosphate</text>
        <dbReference type="Rhea" id="RHEA:21080"/>
        <dbReference type="ChEBI" id="CHEBI:15377"/>
        <dbReference type="ChEBI" id="CHEBI:30616"/>
        <dbReference type="ChEBI" id="CHEBI:33019"/>
        <dbReference type="ChEBI" id="CHEBI:43474"/>
        <dbReference type="ChEBI" id="CHEBI:57844"/>
        <dbReference type="ChEBI" id="CHEBI:59789"/>
        <dbReference type="EC" id="2.5.1.6"/>
    </reaction>
</comment>
<comment type="cofactor">
    <cofactor evidence="1">
        <name>Mg(2+)</name>
        <dbReference type="ChEBI" id="CHEBI:18420"/>
    </cofactor>
    <text evidence="1">Binds 2 divalent ions per subunit.</text>
</comment>
<comment type="cofactor">
    <cofactor evidence="1">
        <name>K(+)</name>
        <dbReference type="ChEBI" id="CHEBI:29103"/>
    </cofactor>
    <text evidence="1">Binds 1 potassium ion per subunit.</text>
</comment>
<comment type="pathway">
    <text evidence="1">Amino-acid biosynthesis; S-adenosyl-L-methionine biosynthesis; S-adenosyl-L-methionine from L-methionine: step 1/1.</text>
</comment>
<comment type="subunit">
    <text evidence="1">Homotetramer; dimer of dimers.</text>
</comment>
<comment type="subcellular location">
    <subcellularLocation>
        <location evidence="1">Cytoplasm</location>
    </subcellularLocation>
</comment>
<comment type="similarity">
    <text evidence="1">Belongs to the AdoMet synthase family.</text>
</comment>
<evidence type="ECO:0000255" key="1">
    <source>
        <dbReference type="HAMAP-Rule" id="MF_00086"/>
    </source>
</evidence>
<name>METK_BORAP</name>
<organism>
    <name type="scientific">Borreliella afzelii (strain PKo)</name>
    <name type="common">Borrelia afzelii</name>
    <dbReference type="NCBI Taxonomy" id="390236"/>
    <lineage>
        <taxon>Bacteria</taxon>
        <taxon>Pseudomonadati</taxon>
        <taxon>Spirochaetota</taxon>
        <taxon>Spirochaetia</taxon>
        <taxon>Spirochaetales</taxon>
        <taxon>Borreliaceae</taxon>
        <taxon>Borreliella</taxon>
    </lineage>
</organism>
<accession>Q0SND7</accession>
<accession>G0IS20</accession>
<reference key="1">
    <citation type="journal article" date="2006" name="BMC Genomics">
        <title>Comparative genome analysis: selection pressure on the Borrelia vls cassettes is essential for infectivity.</title>
        <authorList>
            <person name="Gloeckner G."/>
            <person name="Schulte-Spechtel U."/>
            <person name="Schilhabel M."/>
            <person name="Felder M."/>
            <person name="Suehnel J."/>
            <person name="Wilske B."/>
            <person name="Platzer M."/>
        </authorList>
    </citation>
    <scope>NUCLEOTIDE SEQUENCE [LARGE SCALE GENOMIC DNA]</scope>
    <source>
        <strain>PKo</strain>
    </source>
</reference>
<reference key="2">
    <citation type="journal article" date="2011" name="J. Bacteriol.">
        <title>Whole-genome sequences of two Borrelia afzelii and two Borrelia garinii Lyme disease agent isolates.</title>
        <authorList>
            <person name="Casjens S.R."/>
            <person name="Mongodin E.F."/>
            <person name="Qiu W.G."/>
            <person name="Dunn J.J."/>
            <person name="Luft B.J."/>
            <person name="Fraser-Liggett C.M."/>
            <person name="Schutzer S.E."/>
        </authorList>
    </citation>
    <scope>NUCLEOTIDE SEQUENCE [LARGE SCALE GENOMIC DNA]</scope>
    <source>
        <strain>PKo</strain>
    </source>
</reference>
<feature type="chain" id="PRO_0000302897" description="S-adenosylmethionine synthase">
    <location>
        <begin position="1"/>
        <end position="392"/>
    </location>
</feature>
<feature type="region of interest" description="Flexible loop" evidence="1">
    <location>
        <begin position="106"/>
        <end position="116"/>
    </location>
</feature>
<feature type="binding site" description="in other chain" evidence="1">
    <location>
        <position position="20"/>
    </location>
    <ligand>
        <name>ATP</name>
        <dbReference type="ChEBI" id="CHEBI:30616"/>
        <note>ligand shared between two neighboring subunits</note>
    </ligand>
</feature>
<feature type="binding site" evidence="1">
    <location>
        <position position="22"/>
    </location>
    <ligand>
        <name>Mg(2+)</name>
        <dbReference type="ChEBI" id="CHEBI:18420"/>
    </ligand>
</feature>
<feature type="binding site" evidence="1">
    <location>
        <position position="48"/>
    </location>
    <ligand>
        <name>K(+)</name>
        <dbReference type="ChEBI" id="CHEBI:29103"/>
    </ligand>
</feature>
<feature type="binding site" description="in other chain" evidence="1">
    <location>
        <position position="61"/>
    </location>
    <ligand>
        <name>L-methionine</name>
        <dbReference type="ChEBI" id="CHEBI:57844"/>
        <note>ligand shared between two neighboring subunits</note>
    </ligand>
</feature>
<feature type="binding site" description="in other chain" evidence="1">
    <location>
        <position position="106"/>
    </location>
    <ligand>
        <name>L-methionine</name>
        <dbReference type="ChEBI" id="CHEBI:57844"/>
        <note>ligand shared between two neighboring subunits</note>
    </ligand>
</feature>
<feature type="binding site" description="in other chain" evidence="1">
    <location>
        <begin position="171"/>
        <end position="173"/>
    </location>
    <ligand>
        <name>ATP</name>
        <dbReference type="ChEBI" id="CHEBI:30616"/>
        <note>ligand shared between two neighboring subunits</note>
    </ligand>
</feature>
<feature type="binding site" evidence="1">
    <location>
        <position position="248"/>
    </location>
    <ligand>
        <name>ATP</name>
        <dbReference type="ChEBI" id="CHEBI:30616"/>
        <note>ligand shared between two neighboring subunits</note>
    </ligand>
</feature>
<feature type="binding site" evidence="1">
    <location>
        <position position="248"/>
    </location>
    <ligand>
        <name>L-methionine</name>
        <dbReference type="ChEBI" id="CHEBI:57844"/>
        <note>ligand shared between two neighboring subunits</note>
    </ligand>
</feature>
<feature type="binding site" description="in other chain" evidence="1">
    <location>
        <begin position="254"/>
        <end position="255"/>
    </location>
    <ligand>
        <name>ATP</name>
        <dbReference type="ChEBI" id="CHEBI:30616"/>
        <note>ligand shared between two neighboring subunits</note>
    </ligand>
</feature>
<feature type="binding site" evidence="1">
    <location>
        <position position="271"/>
    </location>
    <ligand>
        <name>ATP</name>
        <dbReference type="ChEBI" id="CHEBI:30616"/>
        <note>ligand shared between two neighboring subunits</note>
    </ligand>
</feature>
<feature type="binding site" evidence="1">
    <location>
        <position position="275"/>
    </location>
    <ligand>
        <name>ATP</name>
        <dbReference type="ChEBI" id="CHEBI:30616"/>
        <note>ligand shared between two neighboring subunits</note>
    </ligand>
</feature>
<feature type="binding site" description="in other chain" evidence="1">
    <location>
        <position position="279"/>
    </location>
    <ligand>
        <name>L-methionine</name>
        <dbReference type="ChEBI" id="CHEBI:57844"/>
        <note>ligand shared between two neighboring subunits</note>
    </ligand>
</feature>
<sequence>MNKIIAANQTLTSEAVSEGHPDKIADQISDAILDEMLKVDKNAKVACEVIIAQNLVVIAGEINSPVKKNIDIKEIAKNIIKDIGYTNIDYGLDYKTITVIDAVGNQSRDIINAIEKEGSNTLGAGDQGIIFGYACDDTKNFLPAPYELANSILKKASNLRKSGAIEWLRPDSKSQVTMEYDKNRRPIKIKNIVVSHQHHPNISQKLMRQTIIEEIIKPTIQDKSILDENTTYCINPSGNFVIGGPTGDTGLTGRKIIADSYGGFARHGGGAYSGKDATKVDRSAAYMARYIAKNMVAAGISKEFELQLAYAIGIENPISIQITAGINDPKYASKILNFIVNNFDLTPNGIIEKLKLKQPIYLKTCTYGHFGKNEFEWEKLDFVKKIQTVLKK</sequence>
<gene>
    <name evidence="1" type="primary">metK</name>
    <name type="ordered locus">BAPKO_0385</name>
    <name type="ordered locus">BafPKo_0375</name>
</gene>
<dbReference type="EC" id="2.5.1.6" evidence="1"/>
<dbReference type="EMBL" id="CP000395">
    <property type="protein sequence ID" value="ABH01641.1"/>
    <property type="molecule type" value="Genomic_DNA"/>
</dbReference>
<dbReference type="EMBL" id="CP002933">
    <property type="protein sequence ID" value="AEL69601.1"/>
    <property type="molecule type" value="Genomic_DNA"/>
</dbReference>
<dbReference type="RefSeq" id="WP_004790245.1">
    <property type="nucleotide sequence ID" value="NZ_CP160066.1"/>
</dbReference>
<dbReference type="SMR" id="Q0SND7"/>
<dbReference type="STRING" id="29518.BLA32_02435"/>
<dbReference type="GeneID" id="77265211"/>
<dbReference type="KEGG" id="baf:BAPKO_0385"/>
<dbReference type="KEGG" id="bafz:BafPKo_0375"/>
<dbReference type="PATRIC" id="fig|390236.22.peg.368"/>
<dbReference type="eggNOG" id="COG0192">
    <property type="taxonomic scope" value="Bacteria"/>
</dbReference>
<dbReference type="HOGENOM" id="CLU_041802_1_1_12"/>
<dbReference type="OrthoDB" id="9801686at2"/>
<dbReference type="UniPathway" id="UPA00315">
    <property type="reaction ID" value="UER00080"/>
</dbReference>
<dbReference type="Proteomes" id="UP000005216">
    <property type="component" value="Chromosome"/>
</dbReference>
<dbReference type="GO" id="GO:0005737">
    <property type="term" value="C:cytoplasm"/>
    <property type="evidence" value="ECO:0007669"/>
    <property type="project" value="UniProtKB-SubCell"/>
</dbReference>
<dbReference type="GO" id="GO:0005524">
    <property type="term" value="F:ATP binding"/>
    <property type="evidence" value="ECO:0007669"/>
    <property type="project" value="UniProtKB-UniRule"/>
</dbReference>
<dbReference type="GO" id="GO:0000287">
    <property type="term" value="F:magnesium ion binding"/>
    <property type="evidence" value="ECO:0007669"/>
    <property type="project" value="UniProtKB-UniRule"/>
</dbReference>
<dbReference type="GO" id="GO:0004478">
    <property type="term" value="F:methionine adenosyltransferase activity"/>
    <property type="evidence" value="ECO:0007669"/>
    <property type="project" value="UniProtKB-UniRule"/>
</dbReference>
<dbReference type="GO" id="GO:0006730">
    <property type="term" value="P:one-carbon metabolic process"/>
    <property type="evidence" value="ECO:0007669"/>
    <property type="project" value="UniProtKB-KW"/>
</dbReference>
<dbReference type="GO" id="GO:0006556">
    <property type="term" value="P:S-adenosylmethionine biosynthetic process"/>
    <property type="evidence" value="ECO:0007669"/>
    <property type="project" value="UniProtKB-UniRule"/>
</dbReference>
<dbReference type="CDD" id="cd18079">
    <property type="entry name" value="S-AdoMet_synt"/>
    <property type="match status" value="1"/>
</dbReference>
<dbReference type="FunFam" id="3.30.300.10:FF:000003">
    <property type="entry name" value="S-adenosylmethionine synthase"/>
    <property type="match status" value="1"/>
</dbReference>
<dbReference type="Gene3D" id="3.30.300.10">
    <property type="match status" value="3"/>
</dbReference>
<dbReference type="HAMAP" id="MF_00086">
    <property type="entry name" value="S_AdoMet_synth1"/>
    <property type="match status" value="1"/>
</dbReference>
<dbReference type="InterPro" id="IPR022631">
    <property type="entry name" value="ADOMET_SYNTHASE_CS"/>
</dbReference>
<dbReference type="InterPro" id="IPR022630">
    <property type="entry name" value="S-AdoMet_synt_C"/>
</dbReference>
<dbReference type="InterPro" id="IPR022629">
    <property type="entry name" value="S-AdoMet_synt_central"/>
</dbReference>
<dbReference type="InterPro" id="IPR022628">
    <property type="entry name" value="S-AdoMet_synt_N"/>
</dbReference>
<dbReference type="InterPro" id="IPR002133">
    <property type="entry name" value="S-AdoMet_synthetase"/>
</dbReference>
<dbReference type="InterPro" id="IPR022636">
    <property type="entry name" value="S-AdoMet_synthetase_sfam"/>
</dbReference>
<dbReference type="NCBIfam" id="TIGR01034">
    <property type="entry name" value="metK"/>
    <property type="match status" value="1"/>
</dbReference>
<dbReference type="PANTHER" id="PTHR11964">
    <property type="entry name" value="S-ADENOSYLMETHIONINE SYNTHETASE"/>
    <property type="match status" value="1"/>
</dbReference>
<dbReference type="Pfam" id="PF02773">
    <property type="entry name" value="S-AdoMet_synt_C"/>
    <property type="match status" value="1"/>
</dbReference>
<dbReference type="Pfam" id="PF02772">
    <property type="entry name" value="S-AdoMet_synt_M"/>
    <property type="match status" value="1"/>
</dbReference>
<dbReference type="Pfam" id="PF00438">
    <property type="entry name" value="S-AdoMet_synt_N"/>
    <property type="match status" value="1"/>
</dbReference>
<dbReference type="PIRSF" id="PIRSF000497">
    <property type="entry name" value="MAT"/>
    <property type="match status" value="1"/>
</dbReference>
<dbReference type="SUPFAM" id="SSF55973">
    <property type="entry name" value="S-adenosylmethionine synthetase"/>
    <property type="match status" value="3"/>
</dbReference>
<dbReference type="PROSITE" id="PS00376">
    <property type="entry name" value="ADOMET_SYNTHASE_1"/>
    <property type="match status" value="1"/>
</dbReference>
<dbReference type="PROSITE" id="PS00377">
    <property type="entry name" value="ADOMET_SYNTHASE_2"/>
    <property type="match status" value="1"/>
</dbReference>
<proteinExistence type="inferred from homology"/>
<keyword id="KW-0067">ATP-binding</keyword>
<keyword id="KW-0963">Cytoplasm</keyword>
<keyword id="KW-0460">Magnesium</keyword>
<keyword id="KW-0479">Metal-binding</keyword>
<keyword id="KW-0547">Nucleotide-binding</keyword>
<keyword id="KW-0554">One-carbon metabolism</keyword>
<keyword id="KW-0630">Potassium</keyword>
<keyword id="KW-0808">Transferase</keyword>
<protein>
    <recommendedName>
        <fullName evidence="1">S-adenosylmethionine synthase</fullName>
        <shortName evidence="1">AdoMet synthase</shortName>
        <ecNumber evidence="1">2.5.1.6</ecNumber>
    </recommendedName>
    <alternativeName>
        <fullName evidence="1">MAT</fullName>
    </alternativeName>
    <alternativeName>
        <fullName evidence="1">Methionine adenosyltransferase</fullName>
    </alternativeName>
</protein>